<protein>
    <recommendedName>
        <fullName evidence="14">3-oxoacyl-[acyl-carrier-protein] synthase 2</fullName>
        <ecNumber evidence="9 15">2.3.1.179</ecNumber>
    </recommendedName>
    <alternativeName>
        <fullName evidence="14">3-oxoacyl-[acyl-carrier-protein] synthase II</fullName>
    </alternativeName>
    <alternativeName>
        <fullName evidence="11">Beta-ketoacyl-ACP synthase II</fullName>
        <shortName evidence="12">KAS II</shortName>
    </alternativeName>
</protein>
<evidence type="ECO:0000255" key="1">
    <source>
        <dbReference type="PROSITE-ProRule" id="PRU01348"/>
    </source>
</evidence>
<evidence type="ECO:0000269" key="2">
    <source>
    </source>
</evidence>
<evidence type="ECO:0000269" key="3">
    <source>
    </source>
</evidence>
<evidence type="ECO:0000269" key="4">
    <source>
    </source>
</evidence>
<evidence type="ECO:0000269" key="5">
    <source>
    </source>
</evidence>
<evidence type="ECO:0000269" key="6">
    <source>
    </source>
</evidence>
<evidence type="ECO:0000269" key="7">
    <source>
    </source>
</evidence>
<evidence type="ECO:0000269" key="8">
    <source>
    </source>
</evidence>
<evidence type="ECO:0000269" key="9">
    <source>
    </source>
</evidence>
<evidence type="ECO:0000269" key="10">
    <source>
    </source>
</evidence>
<evidence type="ECO:0000303" key="11">
    <source>
    </source>
</evidence>
<evidence type="ECO:0000303" key="12">
    <source>
    </source>
</evidence>
<evidence type="ECO:0000303" key="13">
    <source>
    </source>
</evidence>
<evidence type="ECO:0000305" key="14"/>
<evidence type="ECO:0000305" key="15">
    <source>
    </source>
</evidence>
<evidence type="ECO:0000305" key="16">
    <source>
    </source>
</evidence>
<evidence type="ECO:0007744" key="17">
    <source>
        <dbReference type="PDB" id="1B3N"/>
    </source>
</evidence>
<evidence type="ECO:0007744" key="18">
    <source>
        <dbReference type="PDB" id="1KAS"/>
    </source>
</evidence>
<evidence type="ECO:0007744" key="19">
    <source>
        <dbReference type="PDB" id="2GFV"/>
    </source>
</evidence>
<evidence type="ECO:0007744" key="20">
    <source>
        <dbReference type="PDB" id="2GFW"/>
    </source>
</evidence>
<evidence type="ECO:0007744" key="21">
    <source>
        <dbReference type="PDB" id="2GFX"/>
    </source>
</evidence>
<evidence type="ECO:0007744" key="22">
    <source>
        <dbReference type="PDB" id="2GFY"/>
    </source>
</evidence>
<evidence type="ECO:0007744" key="23">
    <source>
        <dbReference type="PDB" id="3G0Y"/>
    </source>
</evidence>
<evidence type="ECO:0007744" key="24">
    <source>
        <dbReference type="PDB" id="3G11"/>
    </source>
</evidence>
<evidence type="ECO:0007744" key="25">
    <source>
        <dbReference type="PDB" id="3HNZ"/>
    </source>
</evidence>
<evidence type="ECO:0007744" key="26">
    <source>
        <dbReference type="PDB" id="3HO2"/>
    </source>
</evidence>
<evidence type="ECO:0007744" key="27">
    <source>
        <dbReference type="PDB" id="3HO9"/>
    </source>
</evidence>
<evidence type="ECO:0007744" key="28">
    <source>
        <dbReference type="PDB" id="3I8P"/>
    </source>
</evidence>
<evidence type="ECO:0007829" key="29">
    <source>
        <dbReference type="PDB" id="2GFV"/>
    </source>
</evidence>
<evidence type="ECO:0007829" key="30">
    <source>
        <dbReference type="PDB" id="3HO9"/>
    </source>
</evidence>
<sequence length="413" mass="43046">MSKRRVVVTGLGMLSPVGNTVESTWKALLAGQSGISLIDHFDTSAYATKFAGLVKDFNCEDIISRKEQRKMDAFIQYGIVAGVQAMQDSGLEITEENATRIGAAIGSGIGGLGLIEENHTSLMNGGPRKISPFFVPSTIVNMVAGHLTIMYGLRGPSISIATACTSGVHNIGHAARIIAYGDADVMVAGGAEKASTPLGVGGFGAARALSTRNDNPQAASRPWDKERDGFVLGDGAGMLVLEEYEHAKKRGAKIYAELVGFGMSSDAYHMTSPPENGAGAALAMANALRDAGIEASQIGYVNAHGTSTPAGDKAEAQAVKTIFGEAASRVLVSSTKSMTGHLLGAAGAVESIYSILALRDQAVPPTINLDNPDEGCDLDFVPHEARQVSGMEYTLCNSFGFGGTNGSLIFKKI</sequence>
<proteinExistence type="evidence at protein level"/>
<reference key="1">
    <citation type="journal article" date="1994" name="Proc. Natl. Acad. Sci. U.S.A.">
        <title>The fabJ-encoded beta-ketoacyl-[acyl carrier protein] synthase IV from Escherichia coli is sensitive to cerulenin and specific for short-chain substrates.</title>
        <authorList>
            <person name="Siggaard-Andersen M."/>
            <person name="Wissenbach M."/>
            <person name="Chuck J.-A."/>
            <person name="Svendsen I."/>
            <person name="Olsen J.G."/>
            <person name="von Wettstein-Knowles P.V."/>
        </authorList>
    </citation>
    <scope>NUCLEOTIDE SEQUENCE [GENOMIC DNA]</scope>
    <scope>PROTEIN SEQUENCE OF 2-32</scope>
    <source>
        <strain>K12 / W3110 / ATCC 27325 / DSM 5911</strain>
    </source>
</reference>
<reference key="2">
    <citation type="journal article" date="1995" name="J. Bacteriol.">
        <title>The putative fabJ gene of Escherichia coli fatty acid synthesis is the fabF gene.</title>
        <authorList>
            <person name="Magnuson K."/>
            <person name="Carey M.R."/>
            <person name="Cronan J.E. Jr."/>
        </authorList>
    </citation>
    <scope>NUCLEOTIDE SEQUENCE [GENOMIC DNA]</scope>
    <scope>IDENTITY OF FABF AND FABJ</scope>
    <source>
        <strain>K12 / UB1005</strain>
    </source>
</reference>
<reference key="3">
    <citation type="journal article" date="1996" name="DNA Res.">
        <title>A 718-kb DNA sequence of the Escherichia coli K-12 genome corresponding to the 12.7-28.0 min region on the linkage map.</title>
        <authorList>
            <person name="Oshima T."/>
            <person name="Aiba H."/>
            <person name="Baba T."/>
            <person name="Fujita K."/>
            <person name="Hayashi K."/>
            <person name="Honjo A."/>
            <person name="Ikemoto K."/>
            <person name="Inada T."/>
            <person name="Itoh T."/>
            <person name="Kajihara M."/>
            <person name="Kanai K."/>
            <person name="Kashimoto K."/>
            <person name="Kimura S."/>
            <person name="Kitagawa M."/>
            <person name="Makino K."/>
            <person name="Masuda S."/>
            <person name="Miki T."/>
            <person name="Mizobuchi K."/>
            <person name="Mori H."/>
            <person name="Motomura K."/>
            <person name="Nakamura Y."/>
            <person name="Nashimoto H."/>
            <person name="Nishio Y."/>
            <person name="Saito N."/>
            <person name="Sampei G."/>
            <person name="Seki Y."/>
            <person name="Tagami H."/>
            <person name="Takemoto K."/>
            <person name="Wada C."/>
            <person name="Yamamoto Y."/>
            <person name="Yano M."/>
            <person name="Horiuchi T."/>
        </authorList>
    </citation>
    <scope>NUCLEOTIDE SEQUENCE [LARGE SCALE GENOMIC DNA]</scope>
    <source>
        <strain>K12 / W3110 / ATCC 27325 / DSM 5911</strain>
    </source>
</reference>
<reference key="4">
    <citation type="journal article" date="1997" name="Science">
        <title>The complete genome sequence of Escherichia coli K-12.</title>
        <authorList>
            <person name="Blattner F.R."/>
            <person name="Plunkett G. III"/>
            <person name="Bloch C.A."/>
            <person name="Perna N.T."/>
            <person name="Burland V."/>
            <person name="Riley M."/>
            <person name="Collado-Vides J."/>
            <person name="Glasner J.D."/>
            <person name="Rode C.K."/>
            <person name="Mayhew G.F."/>
            <person name="Gregor J."/>
            <person name="Davis N.W."/>
            <person name="Kirkpatrick H.A."/>
            <person name="Goeden M.A."/>
            <person name="Rose D.J."/>
            <person name="Mau B."/>
            <person name="Shao Y."/>
        </authorList>
    </citation>
    <scope>NUCLEOTIDE SEQUENCE [LARGE SCALE GENOMIC DNA]</scope>
    <source>
        <strain>K12 / MG1655 / ATCC 47076</strain>
    </source>
</reference>
<reference key="5">
    <citation type="journal article" date="2006" name="Mol. Syst. Biol.">
        <title>Highly accurate genome sequences of Escherichia coli K-12 strains MG1655 and W3110.</title>
        <authorList>
            <person name="Hayashi K."/>
            <person name="Morooka N."/>
            <person name="Yamamoto Y."/>
            <person name="Fujita K."/>
            <person name="Isono K."/>
            <person name="Choi S."/>
            <person name="Ohtsubo E."/>
            <person name="Baba T."/>
            <person name="Wanner B.L."/>
            <person name="Mori H."/>
            <person name="Horiuchi T."/>
        </authorList>
    </citation>
    <scope>NUCLEOTIDE SEQUENCE [LARGE SCALE GENOMIC DNA]</scope>
    <source>
        <strain>K12 / W3110 / ATCC 27325 / DSM 5911</strain>
    </source>
</reference>
<reference key="6">
    <citation type="journal article" date="1987" name="J. Bacteriol.">
        <title>Altered molecular form of acyl carrier protein associated with beta-ketoacyl-acyl carrier protein synthase II (fabF) mutants.</title>
        <authorList>
            <person name="Jackowski S."/>
            <person name="Rock C.O."/>
        </authorList>
    </citation>
    <scope>IDENTIFICATION OF FABF AS KASII</scope>
</reference>
<reference key="7">
    <citation type="journal article" date="1980" name="J. Biol. Chem.">
        <title>Beta-ketoacyl-acyl carrier protein synthase II of Escherichia coli. Evidence for function in the thermal regulation of fatty acid synthesis.</title>
        <authorList>
            <person name="Garwin J.L."/>
            <person name="Klages A.L."/>
            <person name="Cronan J.E. Jr."/>
        </authorList>
    </citation>
    <scope>FUNCTION</scope>
    <scope>CATALYTIC ACTIVITY</scope>
    <scope>PATHWAY</scope>
</reference>
<reference key="8">
    <citation type="journal article" date="1997" name="FEBS Lett.">
        <title>Cloning of the fabF gene in an expression vector and in vitro characterization of recombinant fabF and fabB encoded enzymes from Escherichia coli.</title>
        <authorList>
            <person name="Edwards P."/>
            <person name="Nelsen J.S."/>
            <person name="Metz J.G."/>
            <person name="Dehesh K."/>
        </authorList>
    </citation>
    <scope>FUNCTION</scope>
    <scope>CATALYTIC ACTIVITY</scope>
    <scope>SUBUNIT</scope>
</reference>
<reference key="9">
    <citation type="journal article" date="2011" name="Biochemistry">
        <title>Substrate recognition by beta-ketoacyl-ACP synthases.</title>
        <authorList>
            <person name="Borgaro J.G."/>
            <person name="Chang A."/>
            <person name="Machutta C.A."/>
            <person name="Zhang X."/>
            <person name="Tonge P.J."/>
        </authorList>
    </citation>
    <scope>FUNCTION</scope>
    <scope>CATALYTIC ACTIVITY</scope>
    <scope>BIOPHYSICOCHEMICAL PROPERTIES</scope>
    <scope>MUTAGENESIS OF ARG-207</scope>
</reference>
<reference evidence="18" key="10">
    <citation type="journal article" date="1998" name="EMBO J.">
        <title>Crystal structure of beta-ketoacyl-acyl carrier protein synthase II from E.coli reveals the molecular architecture of condensing enzymes.</title>
        <authorList>
            <person name="Huang W."/>
            <person name="Jia J."/>
            <person name="Edwards P."/>
            <person name="Dehesh K."/>
            <person name="Schneider G."/>
            <person name="Lindqvist Y."/>
        </authorList>
    </citation>
    <scope>X-RAY CRYSTALLOGRAPHY (2.40 ANGSTROMS) OF 2-413</scope>
    <scope>SUBUNIT</scope>
    <scope>ACTIVE SITE</scope>
</reference>
<reference evidence="17" key="11">
    <citation type="journal article" date="1999" name="J. Biol. Chem.">
        <title>Structure of the complex between the antibiotic cerulenin and its target, beta-ketoacyl-acyl carrier protein synthase.</title>
        <authorList>
            <person name="Moche M."/>
            <person name="Schneider G."/>
            <person name="Edwards P."/>
            <person name="Dehesh K."/>
            <person name="Lindqvist Y."/>
        </authorList>
    </citation>
    <scope>X-RAY CRYSTALLOGRAPHY (2.65 ANGSTROMS) OF 2-413 IN COMPLEX WITH CERULENIN</scope>
    <scope>ACTIVE SITE</scope>
</reference>
<reference evidence="19 20 21 22" key="12">
    <citation type="journal article" date="2006" name="Nature">
        <title>Platensimycin is a selective FabF inhibitor with potent antibiotic properties.</title>
        <authorList>
            <person name="Wang J."/>
            <person name="Soisson S.M."/>
            <person name="Young K."/>
            <person name="Shoop W."/>
            <person name="Kodali S."/>
            <person name="Galgoci A."/>
            <person name="Painter R."/>
            <person name="Parthasarathy G."/>
            <person name="Tang Y.S."/>
            <person name="Cummings R."/>
            <person name="Ha S."/>
            <person name="Dorso K."/>
            <person name="Motyl M."/>
            <person name="Jayasuriya H."/>
            <person name="Ondeyka J."/>
            <person name="Herath K."/>
            <person name="Zhang C."/>
            <person name="Hernandez L."/>
            <person name="Allocco J."/>
            <person name="Basilio A."/>
            <person name="Tormo J.R."/>
            <person name="Genilloud O."/>
            <person name="Vicente F."/>
            <person name="Pelaez F."/>
            <person name="Colwell L."/>
            <person name="Lee S.H."/>
            <person name="Michael B."/>
            <person name="Felcetto T."/>
            <person name="Gill C."/>
            <person name="Silver L.L."/>
            <person name="Hermes J.D."/>
            <person name="Bartizal K."/>
            <person name="Barrett J."/>
            <person name="Schmatz D."/>
            <person name="Becker J.W."/>
            <person name="Cully D."/>
            <person name="Singh S.B."/>
        </authorList>
    </citation>
    <scope>X-RAY CRYSTALLOGRAPHY (2.29 ANGSTROMS) OF 2-413 OF WILD-TYPE AND MUTANTS IN COMPLEXES WITH DODECANOIC ACID AND PLATENSIMYCIN</scope>
    <scope>MUTAGENESIS OF CYS-164</scope>
</reference>
<reference evidence="23 24" key="13">
    <citation type="journal article" date="2009" name="Bioorg. Med. Chem. Lett.">
        <title>Synthesis and biological evaluation of platensimycin analogs.</title>
        <authorList>
            <person name="Shen H.C."/>
            <person name="Ding F.X."/>
            <person name="Singh S.B."/>
            <person name="Parthasarathy G."/>
            <person name="Soisson S.M."/>
            <person name="Ha S.N."/>
            <person name="Chen X."/>
            <person name="Kodali S."/>
            <person name="Wang J."/>
            <person name="Dorso K."/>
            <person name="Tata J.R."/>
            <person name="Hammond M.L."/>
            <person name="Maccoss M."/>
            <person name="Colletti S.L."/>
        </authorList>
    </citation>
    <scope>X-RAY CRYSTALLOGRAPHY (2.00 ANGSTROMS) OF 2-413 IN COMPLEXES WITH DIHYDROPLATENSIMYCIN AND DIHYDROPHENYL PLATENSIMYCIN</scope>
</reference>
<reference evidence="25 26 27 28" key="14">
    <citation type="journal article" date="2009" name="Bioorg. Med. Chem. Lett.">
        <title>Isolation, enzyme-bound structure and antibacterial activity of platencin A1 from Streptomyces platensis.</title>
        <authorList>
            <person name="Singh S.B."/>
            <person name="Ondeyka J.G."/>
            <person name="Herath K.B."/>
            <person name="Zhang C."/>
            <person name="Jayasuriya H."/>
            <person name="Zink D.L."/>
            <person name="Parthasarathy G."/>
            <person name="Becker J.W."/>
            <person name="Wang J."/>
            <person name="Soisson S.M."/>
        </authorList>
    </citation>
    <scope>X-RAY CRYSTALLOGRAPHY (1.90 ANGSTROMS) OF 2-413 OF MUTANT ALA-164 IN COMPLEXES WITH PLATENSIMYCIN AND PLATENCIN</scope>
</reference>
<feature type="initiator methionine" description="Removed" evidence="8">
    <location>
        <position position="1"/>
    </location>
</feature>
<feature type="chain" id="PRO_0000180314" description="3-oxoacyl-[acyl-carrier-protein] synthase 2">
    <location>
        <begin position="2"/>
        <end position="413"/>
    </location>
</feature>
<feature type="domain" description="Ketosynthase family 3 (KS3)" evidence="1">
    <location>
        <begin position="3"/>
        <end position="412"/>
    </location>
</feature>
<feature type="active site" description="For beta-ketoacyl synthase activity" evidence="1 2 16">
    <location>
        <position position="164"/>
    </location>
</feature>
<feature type="active site" description="For beta-ketoacyl synthase activity" evidence="1">
    <location>
        <position position="304"/>
    </location>
</feature>
<feature type="active site" description="For beta-ketoacyl synthase activity" evidence="1">
    <location>
        <position position="341"/>
    </location>
</feature>
<feature type="binding site" evidence="5 26 27">
    <location>
        <position position="271"/>
    </location>
    <ligand>
        <name>platencin</name>
        <dbReference type="ChEBI" id="CHEBI:178056"/>
        <note>inhibitor</note>
    </ligand>
</feature>
<feature type="binding site" evidence="3 4 5 21 23 24 25 28">
    <location>
        <position position="271"/>
    </location>
    <ligand>
        <name>platensimycin</name>
        <dbReference type="ChEBI" id="CHEBI:178082"/>
        <note>inhibitor</note>
    </ligand>
</feature>
<feature type="binding site" evidence="3 4 21 23 24">
    <location>
        <position position="304"/>
    </location>
    <ligand>
        <name>platensimycin</name>
        <dbReference type="ChEBI" id="CHEBI:178082"/>
        <note>inhibitor</note>
    </ligand>
</feature>
<feature type="binding site" evidence="5 26 27">
    <location>
        <begin position="308"/>
        <end position="310"/>
    </location>
    <ligand>
        <name>platencin</name>
        <dbReference type="ChEBI" id="CHEBI:178056"/>
        <note>inhibitor</note>
    </ligand>
</feature>
<feature type="binding site" evidence="3 4 5 21 23 24 25 28">
    <location>
        <begin position="308"/>
        <end position="310"/>
    </location>
    <ligand>
        <name>platensimycin</name>
        <dbReference type="ChEBI" id="CHEBI:178082"/>
        <note>inhibitor</note>
    </ligand>
</feature>
<feature type="binding site" evidence="5 26 27">
    <location>
        <position position="341"/>
    </location>
    <ligand>
        <name>platencin</name>
        <dbReference type="ChEBI" id="CHEBI:178056"/>
        <note>inhibitor</note>
    </ligand>
</feature>
<feature type="binding site" evidence="3 4 21 23 24">
    <location>
        <position position="341"/>
    </location>
    <ligand>
        <name>platensimycin</name>
        <dbReference type="ChEBI" id="CHEBI:178082"/>
        <note>inhibitor</note>
    </ligand>
</feature>
<feature type="mutagenesis site" description="50-fold increase in apparent binding of platensimycin." evidence="3">
    <original>C</original>
    <variation>Q</variation>
    <location>
        <position position="164"/>
    </location>
</feature>
<feature type="mutagenesis site" description="Impairs the binding of CoA. 10-fold increase in catalytic efficiency with dodecanoyl-CoA and malonyl-CoA." evidence="6">
    <original>R</original>
    <variation>G</variation>
    <location>
        <position position="207"/>
    </location>
</feature>
<feature type="strand" evidence="30">
    <location>
        <begin position="6"/>
        <end position="15"/>
    </location>
</feature>
<feature type="strand" evidence="30">
    <location>
        <begin position="18"/>
        <end position="20"/>
    </location>
</feature>
<feature type="helix" evidence="30">
    <location>
        <begin position="21"/>
        <end position="29"/>
    </location>
</feature>
<feature type="strand" evidence="30">
    <location>
        <begin position="35"/>
        <end position="37"/>
    </location>
</feature>
<feature type="strand" evidence="30">
    <location>
        <begin position="50"/>
        <end position="52"/>
    </location>
</feature>
<feature type="turn" evidence="30">
    <location>
        <begin position="60"/>
        <end position="62"/>
    </location>
</feature>
<feature type="helix" evidence="30">
    <location>
        <begin position="65"/>
        <end position="68"/>
    </location>
</feature>
<feature type="helix" evidence="30">
    <location>
        <begin position="73"/>
        <end position="89"/>
    </location>
</feature>
<feature type="turn" evidence="30">
    <location>
        <begin position="95"/>
        <end position="97"/>
    </location>
</feature>
<feature type="helix" evidence="30">
    <location>
        <begin position="98"/>
        <end position="100"/>
    </location>
</feature>
<feature type="strand" evidence="30">
    <location>
        <begin position="101"/>
        <end position="106"/>
    </location>
</feature>
<feature type="helix" evidence="30">
    <location>
        <begin position="112"/>
        <end position="125"/>
    </location>
</feature>
<feature type="helix" evidence="30">
    <location>
        <begin position="127"/>
        <end position="129"/>
    </location>
</feature>
<feature type="helix" evidence="30">
    <location>
        <begin position="134"/>
        <end position="138"/>
    </location>
</feature>
<feature type="helix" evidence="30">
    <location>
        <begin position="142"/>
        <end position="151"/>
    </location>
</feature>
<feature type="helix" evidence="30">
    <location>
        <begin position="163"/>
        <end position="165"/>
    </location>
</feature>
<feature type="helix" evidence="30">
    <location>
        <begin position="166"/>
        <end position="180"/>
    </location>
</feature>
<feature type="strand" evidence="30">
    <location>
        <begin position="184"/>
        <end position="192"/>
    </location>
</feature>
<feature type="helix" evidence="30">
    <location>
        <begin position="197"/>
        <end position="205"/>
    </location>
</feature>
<feature type="helix" evidence="30">
    <location>
        <begin position="216"/>
        <end position="219"/>
    </location>
</feature>
<feature type="strand" evidence="30">
    <location>
        <begin position="235"/>
        <end position="243"/>
    </location>
</feature>
<feature type="helix" evidence="30">
    <location>
        <begin position="244"/>
        <end position="249"/>
    </location>
</feature>
<feature type="strand" evidence="30">
    <location>
        <begin position="256"/>
        <end position="265"/>
    </location>
</feature>
<feature type="strand" evidence="29">
    <location>
        <begin position="270"/>
        <end position="272"/>
    </location>
</feature>
<feature type="helix" evidence="30">
    <location>
        <begin position="278"/>
        <end position="291"/>
    </location>
</feature>
<feature type="helix" evidence="30">
    <location>
        <begin position="295"/>
        <end position="297"/>
    </location>
</feature>
<feature type="strand" evidence="30">
    <location>
        <begin position="300"/>
        <end position="302"/>
    </location>
</feature>
<feature type="helix" evidence="30">
    <location>
        <begin position="309"/>
        <end position="323"/>
    </location>
</feature>
<feature type="helix" evidence="30">
    <location>
        <begin position="324"/>
        <end position="328"/>
    </location>
</feature>
<feature type="strand" evidence="30">
    <location>
        <begin position="330"/>
        <end position="333"/>
    </location>
</feature>
<feature type="helix" evidence="30">
    <location>
        <begin position="336"/>
        <end position="339"/>
    </location>
</feature>
<feature type="helix" evidence="30">
    <location>
        <begin position="343"/>
        <end position="345"/>
    </location>
</feature>
<feature type="helix" evidence="30">
    <location>
        <begin position="346"/>
        <end position="360"/>
    </location>
</feature>
<feature type="strand" evidence="30">
    <location>
        <begin position="370"/>
        <end position="372"/>
    </location>
</feature>
<feature type="strand" evidence="30">
    <location>
        <begin position="382"/>
        <end position="384"/>
    </location>
</feature>
<feature type="strand" evidence="30">
    <location>
        <begin position="393"/>
        <end position="400"/>
    </location>
</feature>
<feature type="turn" evidence="30">
    <location>
        <begin position="401"/>
        <end position="403"/>
    </location>
</feature>
<feature type="strand" evidence="30">
    <location>
        <begin position="404"/>
        <end position="411"/>
    </location>
</feature>
<gene>
    <name evidence="11" type="primary">fabF</name>
    <name evidence="13" type="synonym">fabJ</name>
    <name type="ordered locus">b1095</name>
    <name type="ordered locus">JW1081</name>
</gene>
<name>FABF_ECOLI</name>
<organism>
    <name type="scientific">Escherichia coli (strain K12)</name>
    <dbReference type="NCBI Taxonomy" id="83333"/>
    <lineage>
        <taxon>Bacteria</taxon>
        <taxon>Pseudomonadati</taxon>
        <taxon>Pseudomonadota</taxon>
        <taxon>Gammaproteobacteria</taxon>
        <taxon>Enterobacterales</taxon>
        <taxon>Enterobacteriaceae</taxon>
        <taxon>Escherichia</taxon>
    </lineage>
</organism>
<dbReference type="EC" id="2.3.1.179" evidence="9 15"/>
<dbReference type="EMBL" id="Z34979">
    <property type="protein sequence ID" value="CAA84431.1"/>
    <property type="molecule type" value="Genomic_DNA"/>
</dbReference>
<dbReference type="EMBL" id="U20767">
    <property type="protein sequence ID" value="AAA83255.1"/>
    <property type="molecule type" value="Genomic_DNA"/>
</dbReference>
<dbReference type="EMBL" id="U00096">
    <property type="protein sequence ID" value="AAC74179.1"/>
    <property type="molecule type" value="Genomic_DNA"/>
</dbReference>
<dbReference type="EMBL" id="AP009048">
    <property type="protein sequence ID" value="BAA35903.1"/>
    <property type="molecule type" value="Genomic_DNA"/>
</dbReference>
<dbReference type="PIR" id="I41060">
    <property type="entry name" value="I41060"/>
</dbReference>
<dbReference type="RefSeq" id="NP_415613.1">
    <property type="nucleotide sequence ID" value="NC_000913.3"/>
</dbReference>
<dbReference type="RefSeq" id="WP_000044679.1">
    <property type="nucleotide sequence ID" value="NZ_STEB01000016.1"/>
</dbReference>
<dbReference type="PDB" id="1B3N">
    <property type="method" value="X-ray"/>
    <property type="resolution" value="2.65 A"/>
    <property type="chains" value="A=2-413"/>
</dbReference>
<dbReference type="PDB" id="1KAS">
    <property type="method" value="X-ray"/>
    <property type="resolution" value="2.40 A"/>
    <property type="chains" value="A=2-413"/>
</dbReference>
<dbReference type="PDB" id="2GFV">
    <property type="method" value="X-ray"/>
    <property type="resolution" value="2.29 A"/>
    <property type="chains" value="A=2-413"/>
</dbReference>
<dbReference type="PDB" id="2GFW">
    <property type="method" value="X-ray"/>
    <property type="resolution" value="2.40 A"/>
    <property type="chains" value="A=2-413"/>
</dbReference>
<dbReference type="PDB" id="2GFX">
    <property type="method" value="X-ray"/>
    <property type="resolution" value="2.59 A"/>
    <property type="chains" value="A=2-413"/>
</dbReference>
<dbReference type="PDB" id="2GFY">
    <property type="method" value="X-ray"/>
    <property type="resolution" value="2.85 A"/>
    <property type="chains" value="A=2-413"/>
</dbReference>
<dbReference type="PDB" id="3G0Y">
    <property type="method" value="X-ray"/>
    <property type="resolution" value="2.60 A"/>
    <property type="chains" value="A=2-413"/>
</dbReference>
<dbReference type="PDB" id="3G11">
    <property type="method" value="X-ray"/>
    <property type="resolution" value="2.00 A"/>
    <property type="chains" value="A=2-413"/>
</dbReference>
<dbReference type="PDB" id="3HNZ">
    <property type="method" value="X-ray"/>
    <property type="resolution" value="2.75 A"/>
    <property type="chains" value="A=2-413"/>
</dbReference>
<dbReference type="PDB" id="3HO2">
    <property type="method" value="X-ray"/>
    <property type="resolution" value="2.00 A"/>
    <property type="chains" value="A=2-413"/>
</dbReference>
<dbReference type="PDB" id="3HO9">
    <property type="method" value="X-ray"/>
    <property type="resolution" value="1.90 A"/>
    <property type="chains" value="A=2-413"/>
</dbReference>
<dbReference type="PDB" id="3I8P">
    <property type="method" value="X-ray"/>
    <property type="resolution" value="1.90 A"/>
    <property type="chains" value="A=2-413"/>
</dbReference>
<dbReference type="PDB" id="6OKG">
    <property type="method" value="X-ray"/>
    <property type="resolution" value="2.30 A"/>
    <property type="chains" value="A=1-413"/>
</dbReference>
<dbReference type="PDB" id="6OLT">
    <property type="method" value="X-ray"/>
    <property type="resolution" value="2.35 A"/>
    <property type="chains" value="A=1-413"/>
</dbReference>
<dbReference type="PDB" id="7L4E">
    <property type="method" value="X-ray"/>
    <property type="resolution" value="2.00 A"/>
    <property type="chains" value="A=1-413"/>
</dbReference>
<dbReference type="PDB" id="7L4L">
    <property type="method" value="X-ray"/>
    <property type="resolution" value="2.65 A"/>
    <property type="chains" value="A/B=1-413"/>
</dbReference>
<dbReference type="PDBsum" id="1B3N"/>
<dbReference type="PDBsum" id="1KAS"/>
<dbReference type="PDBsum" id="2GFV"/>
<dbReference type="PDBsum" id="2GFW"/>
<dbReference type="PDBsum" id="2GFX"/>
<dbReference type="PDBsum" id="2GFY"/>
<dbReference type="PDBsum" id="3G0Y"/>
<dbReference type="PDBsum" id="3G11"/>
<dbReference type="PDBsum" id="3HNZ"/>
<dbReference type="PDBsum" id="3HO2"/>
<dbReference type="PDBsum" id="3HO9"/>
<dbReference type="PDBsum" id="3I8P"/>
<dbReference type="PDBsum" id="6OKG"/>
<dbReference type="PDBsum" id="6OLT"/>
<dbReference type="PDBsum" id="7L4E"/>
<dbReference type="PDBsum" id="7L4L"/>
<dbReference type="SMR" id="P0AAI5"/>
<dbReference type="BioGRID" id="4260072">
    <property type="interactions" value="212"/>
</dbReference>
<dbReference type="DIP" id="DIP-29377N"/>
<dbReference type="FunCoup" id="P0AAI5">
    <property type="interactions" value="848"/>
</dbReference>
<dbReference type="IntAct" id="P0AAI5">
    <property type="interactions" value="6"/>
</dbReference>
<dbReference type="STRING" id="511145.b1095"/>
<dbReference type="DrugBank" id="DB08366">
    <property type="generic name" value="3-({3-[(1S,4aS,6S,7S,9S,9aR)-1,6-dimethyl-2-oxodecahydro-6,9-epoxy-4a,7-methanobenzo[7]annulen-1-yl]propanoyl}amino)-2,4-dihydroxybenzoic acid"/>
</dbReference>
<dbReference type="DrugBank" id="DB01034">
    <property type="generic name" value="Cerulenin"/>
</dbReference>
<dbReference type="DrugBank" id="DB03017">
    <property type="generic name" value="Lauric acid"/>
</dbReference>
<dbReference type="DrugBank" id="DB08407">
    <property type="generic name" value="Platensimycin"/>
</dbReference>
<dbReference type="SwissLipids" id="SLP:000001811"/>
<dbReference type="jPOST" id="P0AAI5"/>
<dbReference type="PaxDb" id="511145-b1095"/>
<dbReference type="EnsemblBacteria" id="AAC74179">
    <property type="protein sequence ID" value="AAC74179"/>
    <property type="gene ID" value="b1095"/>
</dbReference>
<dbReference type="GeneID" id="86945966"/>
<dbReference type="GeneID" id="946665"/>
<dbReference type="KEGG" id="ecj:JW1081"/>
<dbReference type="KEGG" id="eco:b1095"/>
<dbReference type="KEGG" id="ecoc:C3026_06620"/>
<dbReference type="PATRIC" id="fig|1411691.4.peg.1173"/>
<dbReference type="EchoBASE" id="EB2490"/>
<dbReference type="eggNOG" id="COG0304">
    <property type="taxonomic scope" value="Bacteria"/>
</dbReference>
<dbReference type="HOGENOM" id="CLU_000022_69_2_6"/>
<dbReference type="InParanoid" id="P0AAI5"/>
<dbReference type="OMA" id="QIGHCLG"/>
<dbReference type="OrthoDB" id="9808669at2"/>
<dbReference type="PhylomeDB" id="P0AAI5"/>
<dbReference type="BioCyc" id="EcoCyc:3-OXOACYL-ACP-SYNTHII-MONOMER"/>
<dbReference type="BioCyc" id="MetaCyc:3-OXOACYL-ACP-SYNTHII-MONOMER"/>
<dbReference type="BRENDA" id="2.3.1.179">
    <property type="organism ID" value="2026"/>
</dbReference>
<dbReference type="SABIO-RK" id="P0AAI5"/>
<dbReference type="UniPathway" id="UPA00094"/>
<dbReference type="EvolutionaryTrace" id="P0AAI5"/>
<dbReference type="PRO" id="PR:P0AAI5"/>
<dbReference type="Proteomes" id="UP000000625">
    <property type="component" value="Chromosome"/>
</dbReference>
<dbReference type="GO" id="GO:0005829">
    <property type="term" value="C:cytosol"/>
    <property type="evidence" value="ECO:0007005"/>
    <property type="project" value="UniProtKB"/>
</dbReference>
<dbReference type="GO" id="GO:0004315">
    <property type="term" value="F:3-oxoacyl-[acyl-carrier-protein] synthase activity"/>
    <property type="evidence" value="ECO:0000314"/>
    <property type="project" value="EcoCyc"/>
</dbReference>
<dbReference type="GO" id="GO:0042803">
    <property type="term" value="F:protein homodimerization activity"/>
    <property type="evidence" value="ECO:0000314"/>
    <property type="project" value="EcoCyc"/>
</dbReference>
<dbReference type="GO" id="GO:0006633">
    <property type="term" value="P:fatty acid biosynthetic process"/>
    <property type="evidence" value="ECO:0000318"/>
    <property type="project" value="GO_Central"/>
</dbReference>
<dbReference type="GO" id="GO:0019367">
    <property type="term" value="P:fatty acid elongation, saturated fatty acid"/>
    <property type="evidence" value="ECO:0000314"/>
    <property type="project" value="EcoCyc"/>
</dbReference>
<dbReference type="GO" id="GO:1903966">
    <property type="term" value="P:monounsaturated fatty acid biosynthetic process"/>
    <property type="evidence" value="ECO:0000315"/>
    <property type="project" value="EcoCyc"/>
</dbReference>
<dbReference type="GO" id="GO:0009409">
    <property type="term" value="P:response to cold"/>
    <property type="evidence" value="ECO:0000315"/>
    <property type="project" value="EcoCyc"/>
</dbReference>
<dbReference type="CDD" id="cd00834">
    <property type="entry name" value="KAS_I_II"/>
    <property type="match status" value="1"/>
</dbReference>
<dbReference type="FunFam" id="3.40.47.10:FF:000009">
    <property type="entry name" value="3-oxoacyl-[acyl-carrier-protein] synthase 2"/>
    <property type="match status" value="1"/>
</dbReference>
<dbReference type="Gene3D" id="3.40.47.10">
    <property type="match status" value="1"/>
</dbReference>
<dbReference type="InterPro" id="IPR017568">
    <property type="entry name" value="3-oxoacyl-ACP_synth-2"/>
</dbReference>
<dbReference type="InterPro" id="IPR000794">
    <property type="entry name" value="Beta-ketoacyl_synthase"/>
</dbReference>
<dbReference type="InterPro" id="IPR018201">
    <property type="entry name" value="Ketoacyl_synth_AS"/>
</dbReference>
<dbReference type="InterPro" id="IPR014031">
    <property type="entry name" value="Ketoacyl_synth_C"/>
</dbReference>
<dbReference type="InterPro" id="IPR014030">
    <property type="entry name" value="Ketoacyl_synth_N"/>
</dbReference>
<dbReference type="InterPro" id="IPR020841">
    <property type="entry name" value="PKS_Beta-ketoAc_synthase_dom"/>
</dbReference>
<dbReference type="InterPro" id="IPR016039">
    <property type="entry name" value="Thiolase-like"/>
</dbReference>
<dbReference type="NCBIfam" id="TIGR03150">
    <property type="entry name" value="fabF"/>
    <property type="match status" value="1"/>
</dbReference>
<dbReference type="NCBIfam" id="NF004970">
    <property type="entry name" value="PRK06333.1"/>
    <property type="match status" value="1"/>
</dbReference>
<dbReference type="NCBIfam" id="NF005589">
    <property type="entry name" value="PRK07314.1"/>
    <property type="match status" value="1"/>
</dbReference>
<dbReference type="NCBIfam" id="NF006434">
    <property type="entry name" value="PRK08722.1"/>
    <property type="match status" value="1"/>
</dbReference>
<dbReference type="PANTHER" id="PTHR11712:SF336">
    <property type="entry name" value="3-OXOACYL-[ACYL-CARRIER-PROTEIN] SYNTHASE, MITOCHONDRIAL"/>
    <property type="match status" value="1"/>
</dbReference>
<dbReference type="PANTHER" id="PTHR11712">
    <property type="entry name" value="POLYKETIDE SYNTHASE-RELATED"/>
    <property type="match status" value="1"/>
</dbReference>
<dbReference type="Pfam" id="PF00109">
    <property type="entry name" value="ketoacyl-synt"/>
    <property type="match status" value="1"/>
</dbReference>
<dbReference type="Pfam" id="PF02801">
    <property type="entry name" value="Ketoacyl-synt_C"/>
    <property type="match status" value="1"/>
</dbReference>
<dbReference type="PIRSF" id="PIRSF000447">
    <property type="entry name" value="KAS_II"/>
    <property type="match status" value="1"/>
</dbReference>
<dbReference type="SMART" id="SM00825">
    <property type="entry name" value="PKS_KS"/>
    <property type="match status" value="1"/>
</dbReference>
<dbReference type="SUPFAM" id="SSF53901">
    <property type="entry name" value="Thiolase-like"/>
    <property type="match status" value="2"/>
</dbReference>
<dbReference type="PROSITE" id="PS00606">
    <property type="entry name" value="KS3_1"/>
    <property type="match status" value="1"/>
</dbReference>
<dbReference type="PROSITE" id="PS52004">
    <property type="entry name" value="KS3_2"/>
    <property type="match status" value="1"/>
</dbReference>
<keyword id="KW-0002">3D-structure</keyword>
<keyword id="KW-0012">Acyltransferase</keyword>
<keyword id="KW-0903">Direct protein sequencing</keyword>
<keyword id="KW-0275">Fatty acid biosynthesis</keyword>
<keyword id="KW-0276">Fatty acid metabolism</keyword>
<keyword id="KW-0444">Lipid biosynthesis</keyword>
<keyword id="KW-0443">Lipid metabolism</keyword>
<keyword id="KW-1185">Reference proteome</keyword>
<keyword id="KW-0808">Transferase</keyword>
<accession>P0AAI5</accession>
<accession>P39435</accession>
<comment type="function">
    <text evidence="6 7 9">Involved in the type II fatty acid elongation cycle (PubMed:6988423, PubMed:9013860). Catalyzes the elongation of a wide range of acyl-ACP by the addition of two carbons from malonyl-ACP to an acyl acceptor (PubMed:22017312, PubMed:9013860). Can efficiently catalyze the conversion of palmitoleoyl-ACP (cis-hexadec-9-enoyl-ACP) to cis-vaccenoyl-ACP (cis-octadec-11-enoyl-ACP), an essential step in the thermal regulation of fatty acid composition (PubMed:6988423, PubMed:9013860). Can use acyl chains from C-6 to C-16 (PubMed:22017312, PubMed:9013860). Is able to catalyze the condensation reaction when CoA is the carrier for both substrates (PubMed:22017312).</text>
</comment>
<comment type="catalytic activity">
    <reaction evidence="6 9">
        <text>a fatty acyl-[ACP] + malonyl-[ACP] + H(+) = a 3-oxoacyl-[ACP] + holo-[ACP] + CO2</text>
        <dbReference type="Rhea" id="RHEA:22836"/>
        <dbReference type="Rhea" id="RHEA-COMP:9623"/>
        <dbReference type="Rhea" id="RHEA-COMP:9685"/>
        <dbReference type="Rhea" id="RHEA-COMP:9916"/>
        <dbReference type="Rhea" id="RHEA-COMP:14125"/>
        <dbReference type="ChEBI" id="CHEBI:15378"/>
        <dbReference type="ChEBI" id="CHEBI:16526"/>
        <dbReference type="ChEBI" id="CHEBI:64479"/>
        <dbReference type="ChEBI" id="CHEBI:78449"/>
        <dbReference type="ChEBI" id="CHEBI:78776"/>
        <dbReference type="ChEBI" id="CHEBI:138651"/>
    </reaction>
    <physiologicalReaction direction="left-to-right" evidence="6 9">
        <dbReference type="Rhea" id="RHEA:22837"/>
    </physiologicalReaction>
</comment>
<comment type="catalytic activity">
    <reaction evidence="9 15">
        <text>(9Z)-hexadecenoyl-[ACP] + malonyl-[ACP] + H(+) = 3-oxo-(11Z)-octadecenoyl-[ACP] + holo-[ACP] + CO2</text>
        <dbReference type="Rhea" id="RHEA:55040"/>
        <dbReference type="Rhea" id="RHEA-COMP:9623"/>
        <dbReference type="Rhea" id="RHEA-COMP:9685"/>
        <dbReference type="Rhea" id="RHEA-COMP:10800"/>
        <dbReference type="Rhea" id="RHEA-COMP:14074"/>
        <dbReference type="ChEBI" id="CHEBI:15378"/>
        <dbReference type="ChEBI" id="CHEBI:16526"/>
        <dbReference type="ChEBI" id="CHEBI:64479"/>
        <dbReference type="ChEBI" id="CHEBI:78449"/>
        <dbReference type="ChEBI" id="CHEBI:83989"/>
        <dbReference type="ChEBI" id="CHEBI:138538"/>
        <dbReference type="EC" id="2.3.1.179"/>
    </reaction>
    <physiologicalReaction direction="left-to-right" evidence="9 15">
        <dbReference type="Rhea" id="RHEA:55041"/>
    </physiologicalReaction>
</comment>
<comment type="catalytic activity">
    <reaction evidence="9">
        <text>hexanoyl-[ACP] + malonyl-[ACP] + H(+) = 3-oxooctanoyl-[ACP] + holo-[ACP] + CO2</text>
        <dbReference type="Rhea" id="RHEA:41836"/>
        <dbReference type="Rhea" id="RHEA-COMP:9623"/>
        <dbReference type="Rhea" id="RHEA-COMP:9632"/>
        <dbReference type="Rhea" id="RHEA-COMP:9633"/>
        <dbReference type="Rhea" id="RHEA-COMP:9685"/>
        <dbReference type="ChEBI" id="CHEBI:15378"/>
        <dbReference type="ChEBI" id="CHEBI:16526"/>
        <dbReference type="ChEBI" id="CHEBI:64479"/>
        <dbReference type="ChEBI" id="CHEBI:78449"/>
        <dbReference type="ChEBI" id="CHEBI:78459"/>
        <dbReference type="ChEBI" id="CHEBI:78460"/>
    </reaction>
    <physiologicalReaction direction="left-to-right" evidence="9">
        <dbReference type="Rhea" id="RHEA:41837"/>
    </physiologicalReaction>
</comment>
<comment type="catalytic activity">
    <reaction evidence="9">
        <text>octanoyl-[ACP] + malonyl-[ACP] + H(+) = 3-oxodecanoyl-[ACP] + holo-[ACP] + CO2</text>
        <dbReference type="Rhea" id="RHEA:41852"/>
        <dbReference type="Rhea" id="RHEA-COMP:9623"/>
        <dbReference type="Rhea" id="RHEA-COMP:9636"/>
        <dbReference type="Rhea" id="RHEA-COMP:9637"/>
        <dbReference type="Rhea" id="RHEA-COMP:9685"/>
        <dbReference type="ChEBI" id="CHEBI:15378"/>
        <dbReference type="ChEBI" id="CHEBI:16526"/>
        <dbReference type="ChEBI" id="CHEBI:64479"/>
        <dbReference type="ChEBI" id="CHEBI:78449"/>
        <dbReference type="ChEBI" id="CHEBI:78463"/>
        <dbReference type="ChEBI" id="CHEBI:78464"/>
    </reaction>
    <physiologicalReaction direction="left-to-right" evidence="9">
        <dbReference type="Rhea" id="RHEA:41853"/>
    </physiologicalReaction>
</comment>
<comment type="catalytic activity">
    <reaction evidence="9">
        <text>decanoyl-[ACP] + malonyl-[ACP] + H(+) = 3-oxododecanoyl-[ACP] + holo-[ACP] + CO2</text>
        <dbReference type="Rhea" id="RHEA:41868"/>
        <dbReference type="Rhea" id="RHEA-COMP:9623"/>
        <dbReference type="Rhea" id="RHEA-COMP:9640"/>
        <dbReference type="Rhea" id="RHEA-COMP:9641"/>
        <dbReference type="Rhea" id="RHEA-COMP:9685"/>
        <dbReference type="ChEBI" id="CHEBI:15378"/>
        <dbReference type="ChEBI" id="CHEBI:16526"/>
        <dbReference type="ChEBI" id="CHEBI:64479"/>
        <dbReference type="ChEBI" id="CHEBI:78449"/>
        <dbReference type="ChEBI" id="CHEBI:78468"/>
        <dbReference type="ChEBI" id="CHEBI:78469"/>
    </reaction>
    <physiologicalReaction direction="left-to-right" evidence="9">
        <dbReference type="Rhea" id="RHEA:41869"/>
    </physiologicalReaction>
</comment>
<comment type="catalytic activity">
    <reaction evidence="6 9">
        <text>dodecanoyl-[ACP] + malonyl-[ACP] + H(+) = 3-oxotetradecanoyl-[ACP] + holo-[ACP] + CO2</text>
        <dbReference type="Rhea" id="RHEA:41884"/>
        <dbReference type="Rhea" id="RHEA-COMP:9623"/>
        <dbReference type="Rhea" id="RHEA-COMP:9644"/>
        <dbReference type="Rhea" id="RHEA-COMP:9645"/>
        <dbReference type="Rhea" id="RHEA-COMP:9685"/>
        <dbReference type="ChEBI" id="CHEBI:15378"/>
        <dbReference type="ChEBI" id="CHEBI:16526"/>
        <dbReference type="ChEBI" id="CHEBI:64479"/>
        <dbReference type="ChEBI" id="CHEBI:65264"/>
        <dbReference type="ChEBI" id="CHEBI:78449"/>
        <dbReference type="ChEBI" id="CHEBI:78473"/>
    </reaction>
    <physiologicalReaction direction="left-to-right" evidence="6 9">
        <dbReference type="Rhea" id="RHEA:41885"/>
    </physiologicalReaction>
</comment>
<comment type="catalytic activity">
    <reaction evidence="9">
        <text>tetradecanoyl-[ACP] + malonyl-[ACP] + H(+) = 3-oxohexadecanoyl-[ACP] + holo-[ACP] + CO2</text>
        <dbReference type="Rhea" id="RHEA:41900"/>
        <dbReference type="Rhea" id="RHEA-COMP:9623"/>
        <dbReference type="Rhea" id="RHEA-COMP:9648"/>
        <dbReference type="Rhea" id="RHEA-COMP:9649"/>
        <dbReference type="Rhea" id="RHEA-COMP:9685"/>
        <dbReference type="ChEBI" id="CHEBI:15378"/>
        <dbReference type="ChEBI" id="CHEBI:16526"/>
        <dbReference type="ChEBI" id="CHEBI:64479"/>
        <dbReference type="ChEBI" id="CHEBI:78449"/>
        <dbReference type="ChEBI" id="CHEBI:78477"/>
        <dbReference type="ChEBI" id="CHEBI:78478"/>
    </reaction>
    <physiologicalReaction direction="left-to-right" evidence="9">
        <dbReference type="Rhea" id="RHEA:41901"/>
    </physiologicalReaction>
</comment>
<comment type="biophysicochemical properties">
    <kinetics>
        <KM evidence="6">8.2 uM for malonyl-[ACP] (in the presence of dodecanoyl-[ACP])</KM>
        <KM evidence="6">510 uM for malonyl-CoA (in the presence of dodecanoyl-CoA)</KM>
        <KM evidence="6">53.7 uM for dodecanoyl-CoA (in the presence of malonyl-CoA)</KM>
    </kinetics>
</comment>
<comment type="pathway">
    <text evidence="7">Lipid metabolism; fatty acid biosynthesis.</text>
</comment>
<comment type="subunit">
    <text evidence="9 10">Homodimer.</text>
</comment>
<comment type="interaction">
    <interactant intactId="EBI-542783">
        <id>P0AAI5</id>
    </interactant>
    <interactant intactId="EBI-542092">
        <id>P0A6Y8</id>
        <label>dnaK</label>
    </interactant>
    <organismsDiffer>false</organismsDiffer>
    <experiments>3</experiments>
</comment>
<comment type="miscellaneous">
    <text evidence="2 3 4 5">Identified as a drug target (PubMed:10037680, PubMed:16710421, PubMed:19233644, PubMed:19581087). Inhibited by platensimycin and platencin, which are antibiotic produced by various strains of Streptomyces platensis, and by several platensimycin/platencin analogs (PubMed:16710421, PubMed:19233644, PubMed:19581087). Also inhibited by the fungal mycotoxin cerulenin that binds in a hydrophobic pocket formed at the dimer interface (PubMed:10037680).</text>
</comment>
<comment type="similarity">
    <text evidence="14">Belongs to the thiolase-like superfamily. Beta-ketoacyl-ACP synthases family.</text>
</comment>